<accession>Q92389</accession>
<sequence length="397" mass="42081">MQFSLATLTTLLAFVAAAPANKGFVHAPIKKQSLQAAQSKIPNFASSGPITAELYNELMAYQVQISLGGQTISASIDTGSEILWVWENDSIACQVDQQDCDTDGSYNPKKSSTSKDTGVPFNINYGKGHADGYLYTDNAVIGGASAPGFKFGVNSGDLSSGGFSMVFGIGVNSDASTSISAQLQKSGEISRNLYGMSFSDANLAGTSNDNSEITFGAINTGRYTGSLKTIPRVATQGGYQHFSVSASGKFGDVDLFDNDLVILDSGTTMTYLKSDYYNAFLGGLEDLDITLSDYSGGWHGYPCSENSKINFTYNFSGKEITVTGHDLAIPGNAVNSNVDSSVCFMGVDDGGNMNLFGDTFLRAIYSVYDLERDEVSIAQAAHGKPDNYVVITGDVPN</sequence>
<feature type="signal peptide" evidence="2">
    <location>
        <begin position="1"/>
        <end position="17"/>
    </location>
</feature>
<feature type="propeptide" id="PRO_0000025832" description="Activation peptide" evidence="2">
    <location>
        <begin position="18"/>
        <end status="unknown"/>
    </location>
</feature>
<feature type="chain" id="PRO_0000025833" description="Acid extracellular protease">
    <location>
        <begin status="unknown"/>
        <end position="397"/>
    </location>
</feature>
<feature type="domain" description="Peptidase A1" evidence="3">
    <location>
        <begin position="61"/>
        <end position="378"/>
    </location>
</feature>
<feature type="active site" evidence="4">
    <location>
        <position position="77"/>
    </location>
</feature>
<feature type="active site" evidence="4">
    <location>
        <position position="264"/>
    </location>
</feature>
<feature type="glycosylation site" description="N-linked (GlcNAc...) asparagine" evidence="2">
    <location>
        <position position="88"/>
    </location>
</feature>
<feature type="glycosylation site" description="N-linked (GlcNAc...) asparagine" evidence="2">
    <location>
        <position position="310"/>
    </location>
</feature>
<feature type="glycosylation site" description="N-linked (GlcNAc...) asparagine" evidence="2">
    <location>
        <position position="314"/>
    </location>
</feature>
<feature type="disulfide bond" evidence="1">
    <location>
        <begin position="93"/>
        <end position="100"/>
    </location>
</feature>
<feature type="disulfide bond" evidence="1">
    <location>
        <begin position="303"/>
        <end position="343"/>
    </location>
</feature>
<keyword id="KW-0064">Aspartyl protease</keyword>
<keyword id="KW-1015">Disulfide bond</keyword>
<keyword id="KW-0325">Glycoprotein</keyword>
<keyword id="KW-0378">Hydrolase</keyword>
<keyword id="KW-0645">Protease</keyword>
<keyword id="KW-1185">Reference proteome</keyword>
<keyword id="KW-0964">Secreted</keyword>
<keyword id="KW-0732">Signal</keyword>
<keyword id="KW-0865">Zymogen</keyword>
<gene>
    <name type="primary">AXP1</name>
    <name type="synonym">AXP</name>
    <name type="ordered locus">YALI0B05654g</name>
</gene>
<organism>
    <name type="scientific">Yarrowia lipolytica (strain CLIB 122 / E 150)</name>
    <name type="common">Yeast</name>
    <name type="synonym">Candida lipolytica</name>
    <dbReference type="NCBI Taxonomy" id="284591"/>
    <lineage>
        <taxon>Eukaryota</taxon>
        <taxon>Fungi</taxon>
        <taxon>Dikarya</taxon>
        <taxon>Ascomycota</taxon>
        <taxon>Saccharomycotina</taxon>
        <taxon>Dipodascomycetes</taxon>
        <taxon>Dipodascales</taxon>
        <taxon>Dipodascales incertae sedis</taxon>
        <taxon>Yarrowia</taxon>
    </lineage>
</organism>
<dbReference type="EC" id="3.4.23.-"/>
<dbReference type="EMBL" id="X97068">
    <property type="protein sequence ID" value="CAA65778.1"/>
    <property type="molecule type" value="Genomic_DNA"/>
</dbReference>
<dbReference type="EMBL" id="CR382128">
    <property type="protein sequence ID" value="CAG82769.1"/>
    <property type="molecule type" value="Genomic_DNA"/>
</dbReference>
<dbReference type="RefSeq" id="XP_500538.1">
    <property type="nucleotide sequence ID" value="XM_500538.1"/>
</dbReference>
<dbReference type="SMR" id="Q92389"/>
<dbReference type="STRING" id="284591.Q92389"/>
<dbReference type="MEROPS" id="A01.036"/>
<dbReference type="GlyCosmos" id="Q92389">
    <property type="glycosylation" value="3 sites, No reported glycans"/>
</dbReference>
<dbReference type="EnsemblFungi" id="CAG82769">
    <property type="protein sequence ID" value="CAG82769"/>
    <property type="gene ID" value="YALI0_B05654g"/>
</dbReference>
<dbReference type="KEGG" id="yli:2907455"/>
<dbReference type="VEuPathDB" id="FungiDB:YALI0_B05654g"/>
<dbReference type="HOGENOM" id="CLU_013253_9_3_1"/>
<dbReference type="InParanoid" id="Q92389"/>
<dbReference type="OMA" id="VWENDSI"/>
<dbReference type="OrthoDB" id="11656at4891"/>
<dbReference type="Proteomes" id="UP000001300">
    <property type="component" value="Chromosome B"/>
</dbReference>
<dbReference type="GO" id="GO:0005576">
    <property type="term" value="C:extracellular region"/>
    <property type="evidence" value="ECO:0000318"/>
    <property type="project" value="GO_Central"/>
</dbReference>
<dbReference type="GO" id="GO:0009277">
    <property type="term" value="C:fungal-type cell wall"/>
    <property type="evidence" value="ECO:0000318"/>
    <property type="project" value="GO_Central"/>
</dbReference>
<dbReference type="GO" id="GO:0004190">
    <property type="term" value="F:aspartic-type endopeptidase activity"/>
    <property type="evidence" value="ECO:0007669"/>
    <property type="project" value="UniProtKB-KW"/>
</dbReference>
<dbReference type="GO" id="GO:0031505">
    <property type="term" value="P:fungal-type cell wall organization"/>
    <property type="evidence" value="ECO:0000318"/>
    <property type="project" value="GO_Central"/>
</dbReference>
<dbReference type="GO" id="GO:0006508">
    <property type="term" value="P:proteolysis"/>
    <property type="evidence" value="ECO:0007669"/>
    <property type="project" value="UniProtKB-KW"/>
</dbReference>
<dbReference type="CDD" id="cd05474">
    <property type="entry name" value="SAP_like"/>
    <property type="match status" value="1"/>
</dbReference>
<dbReference type="FunFam" id="2.40.70.10:FF:000181">
    <property type="entry name" value="Acid extracellular protease"/>
    <property type="match status" value="1"/>
</dbReference>
<dbReference type="Gene3D" id="2.40.70.10">
    <property type="entry name" value="Acid Proteases"/>
    <property type="match status" value="2"/>
</dbReference>
<dbReference type="InterPro" id="IPR001461">
    <property type="entry name" value="Aspartic_peptidase_A1"/>
</dbReference>
<dbReference type="InterPro" id="IPR001969">
    <property type="entry name" value="Aspartic_peptidase_AS"/>
</dbReference>
<dbReference type="InterPro" id="IPR033121">
    <property type="entry name" value="PEPTIDASE_A1"/>
</dbReference>
<dbReference type="InterPro" id="IPR021109">
    <property type="entry name" value="Peptidase_aspartic_dom_sf"/>
</dbReference>
<dbReference type="InterPro" id="IPR033876">
    <property type="entry name" value="SAP-like"/>
</dbReference>
<dbReference type="PANTHER" id="PTHR47966:SF65">
    <property type="entry name" value="ASPARTIC-TYPE ENDOPEPTIDASE"/>
    <property type="match status" value="1"/>
</dbReference>
<dbReference type="PANTHER" id="PTHR47966">
    <property type="entry name" value="BETA-SITE APP-CLEAVING ENZYME, ISOFORM A-RELATED"/>
    <property type="match status" value="1"/>
</dbReference>
<dbReference type="Pfam" id="PF00026">
    <property type="entry name" value="Asp"/>
    <property type="match status" value="1"/>
</dbReference>
<dbReference type="PRINTS" id="PR00792">
    <property type="entry name" value="PEPSIN"/>
</dbReference>
<dbReference type="SUPFAM" id="SSF50630">
    <property type="entry name" value="Acid proteases"/>
    <property type="match status" value="1"/>
</dbReference>
<dbReference type="PROSITE" id="PS00141">
    <property type="entry name" value="ASP_PROTEASE"/>
    <property type="match status" value="1"/>
</dbReference>
<dbReference type="PROSITE" id="PS51767">
    <property type="entry name" value="PEPTIDASE_A1"/>
    <property type="match status" value="1"/>
</dbReference>
<name>AXP1_YARLI</name>
<evidence type="ECO:0000250" key="1"/>
<evidence type="ECO:0000255" key="2"/>
<evidence type="ECO:0000255" key="3">
    <source>
        <dbReference type="PROSITE-ProRule" id="PRU01103"/>
    </source>
</evidence>
<evidence type="ECO:0000255" key="4">
    <source>
        <dbReference type="PROSITE-ProRule" id="PRU10094"/>
    </source>
</evidence>
<evidence type="ECO:0000305" key="5"/>
<proteinExistence type="inferred from homology"/>
<comment type="subcellular location">
    <subcellularLocation>
        <location>Secreted</location>
    </subcellularLocation>
</comment>
<comment type="similarity">
    <text evidence="5">Belongs to the peptidase A1 family.</text>
</comment>
<protein>
    <recommendedName>
        <fullName>Acid extracellular protease</fullName>
        <ecNumber>3.4.23.-</ecNumber>
    </recommendedName>
</protein>
<reference key="1">
    <citation type="journal article" date="1996" name="Microbiology">
        <title>The extracellular acid protease gene of Yarrowia lipolytica: sequence and pH-regulated transcription.</title>
        <authorList>
            <person name="Young T.W."/>
            <person name="Wadeson A."/>
            <person name="Glover D.J."/>
            <person name="Quincey R.V."/>
            <person name="Butlin M.J."/>
            <person name="Kamei E.A."/>
        </authorList>
    </citation>
    <scope>NUCLEOTIDE SEQUENCE [GENOMIC DNA]</scope>
    <source>
        <strain>148</strain>
    </source>
</reference>
<reference key="2">
    <citation type="journal article" date="2004" name="Nature">
        <title>Genome evolution in yeasts.</title>
        <authorList>
            <person name="Dujon B."/>
            <person name="Sherman D."/>
            <person name="Fischer G."/>
            <person name="Durrens P."/>
            <person name="Casaregola S."/>
            <person name="Lafontaine I."/>
            <person name="de Montigny J."/>
            <person name="Marck C."/>
            <person name="Neuveglise C."/>
            <person name="Talla E."/>
            <person name="Goffard N."/>
            <person name="Frangeul L."/>
            <person name="Aigle M."/>
            <person name="Anthouard V."/>
            <person name="Babour A."/>
            <person name="Barbe V."/>
            <person name="Barnay S."/>
            <person name="Blanchin S."/>
            <person name="Beckerich J.-M."/>
            <person name="Beyne E."/>
            <person name="Bleykasten C."/>
            <person name="Boisrame A."/>
            <person name="Boyer J."/>
            <person name="Cattolico L."/>
            <person name="Confanioleri F."/>
            <person name="de Daruvar A."/>
            <person name="Despons L."/>
            <person name="Fabre E."/>
            <person name="Fairhead C."/>
            <person name="Ferry-Dumazet H."/>
            <person name="Groppi A."/>
            <person name="Hantraye F."/>
            <person name="Hennequin C."/>
            <person name="Jauniaux N."/>
            <person name="Joyet P."/>
            <person name="Kachouri R."/>
            <person name="Kerrest A."/>
            <person name="Koszul R."/>
            <person name="Lemaire M."/>
            <person name="Lesur I."/>
            <person name="Ma L."/>
            <person name="Muller H."/>
            <person name="Nicaud J.-M."/>
            <person name="Nikolski M."/>
            <person name="Oztas S."/>
            <person name="Ozier-Kalogeropoulos O."/>
            <person name="Pellenz S."/>
            <person name="Potier S."/>
            <person name="Richard G.-F."/>
            <person name="Straub M.-L."/>
            <person name="Suleau A."/>
            <person name="Swennen D."/>
            <person name="Tekaia F."/>
            <person name="Wesolowski-Louvel M."/>
            <person name="Westhof E."/>
            <person name="Wirth B."/>
            <person name="Zeniou-Meyer M."/>
            <person name="Zivanovic Y."/>
            <person name="Bolotin-Fukuhara M."/>
            <person name="Thierry A."/>
            <person name="Bouchier C."/>
            <person name="Caudron B."/>
            <person name="Scarpelli C."/>
            <person name="Gaillardin C."/>
            <person name="Weissenbach J."/>
            <person name="Wincker P."/>
            <person name="Souciet J.-L."/>
        </authorList>
    </citation>
    <scope>NUCLEOTIDE SEQUENCE [LARGE SCALE GENOMIC DNA]</scope>
    <source>
        <strain>CLIB 122 / E 150</strain>
    </source>
</reference>